<name>PYRB_STAAE</name>
<keyword id="KW-0665">Pyrimidine biosynthesis</keyword>
<keyword id="KW-0808">Transferase</keyword>
<reference key="1">
    <citation type="journal article" date="2008" name="J. Bacteriol.">
        <title>Genome sequence of Staphylococcus aureus strain Newman and comparative analysis of staphylococcal genomes: polymorphism and evolution of two major pathogenicity islands.</title>
        <authorList>
            <person name="Baba T."/>
            <person name="Bae T."/>
            <person name="Schneewind O."/>
            <person name="Takeuchi F."/>
            <person name="Hiramatsu K."/>
        </authorList>
    </citation>
    <scope>NUCLEOTIDE SEQUENCE [LARGE SCALE GENOMIC DNA]</scope>
    <source>
        <strain>Newman</strain>
    </source>
</reference>
<protein>
    <recommendedName>
        <fullName evidence="1">Aspartate carbamoyltransferase catalytic subunit</fullName>
        <ecNumber evidence="1">2.1.3.2</ecNumber>
    </recommendedName>
    <alternativeName>
        <fullName evidence="1">Aspartate transcarbamylase</fullName>
        <shortName evidence="1">ATCase</shortName>
    </alternativeName>
</protein>
<comment type="function">
    <text evidence="1">Catalyzes the condensation of carbamoyl phosphate and aspartate to form carbamoyl aspartate and inorganic phosphate, the committed step in the de novo pyrimidine nucleotide biosynthesis pathway.</text>
</comment>
<comment type="catalytic activity">
    <reaction evidence="1">
        <text>carbamoyl phosphate + L-aspartate = N-carbamoyl-L-aspartate + phosphate + H(+)</text>
        <dbReference type="Rhea" id="RHEA:20013"/>
        <dbReference type="ChEBI" id="CHEBI:15378"/>
        <dbReference type="ChEBI" id="CHEBI:29991"/>
        <dbReference type="ChEBI" id="CHEBI:32814"/>
        <dbReference type="ChEBI" id="CHEBI:43474"/>
        <dbReference type="ChEBI" id="CHEBI:58228"/>
        <dbReference type="EC" id="2.1.3.2"/>
    </reaction>
</comment>
<comment type="pathway">
    <text evidence="1">Pyrimidine metabolism; UMP biosynthesis via de novo pathway; (S)-dihydroorotate from bicarbonate: step 2/3.</text>
</comment>
<comment type="subunit">
    <text evidence="1">Heterododecamer (2C3:3R2) of six catalytic PyrB chains organized as two trimers (C3), and six regulatory PyrI chains organized as three dimers (R2).</text>
</comment>
<comment type="similarity">
    <text evidence="1">Belongs to the aspartate/ornithine carbamoyltransferase superfamily. ATCase family.</text>
</comment>
<sequence length="293" mass="33258">MNHLLSMEHLSTDQIYKLIQKASQFKSGERQLPNFEGKYVANLFFENSTRTKCSFEMAELKLGLKTISFETSTSSVSKGESLYDTCKTLESIGCDLLVIRHPFNNYYEKLANINIPIANAGDGSGQHPTQSLLDLMTIYEEYGYFEGLNVLICGDIKNSRVARSNYHSLKALGANVMFNSPNAWIDDSLEAPYVNIDDVIETVDIVMLLRIQHERHGLAEETRFAADDYHQKHGLNEVRYNKLQEHAIVMHPAPVNRGVEIQSDLVEASKSRIFKQMENGVYLRMAVIDELLK</sequence>
<proteinExistence type="inferred from homology"/>
<dbReference type="EC" id="2.1.3.2" evidence="1"/>
<dbReference type="EMBL" id="AP009351">
    <property type="protein sequence ID" value="BAF67383.1"/>
    <property type="molecule type" value="Genomic_DNA"/>
</dbReference>
<dbReference type="RefSeq" id="WP_001016166.1">
    <property type="nucleotide sequence ID" value="NZ_JBBIAE010000001.1"/>
</dbReference>
<dbReference type="SMR" id="A6QGA1"/>
<dbReference type="KEGG" id="sae:NWMN_1111"/>
<dbReference type="HOGENOM" id="CLU_043846_2_1_9"/>
<dbReference type="UniPathway" id="UPA00070">
    <property type="reaction ID" value="UER00116"/>
</dbReference>
<dbReference type="Proteomes" id="UP000006386">
    <property type="component" value="Chromosome"/>
</dbReference>
<dbReference type="GO" id="GO:0005829">
    <property type="term" value="C:cytosol"/>
    <property type="evidence" value="ECO:0007669"/>
    <property type="project" value="TreeGrafter"/>
</dbReference>
<dbReference type="GO" id="GO:0016597">
    <property type="term" value="F:amino acid binding"/>
    <property type="evidence" value="ECO:0007669"/>
    <property type="project" value="InterPro"/>
</dbReference>
<dbReference type="GO" id="GO:0004070">
    <property type="term" value="F:aspartate carbamoyltransferase activity"/>
    <property type="evidence" value="ECO:0007669"/>
    <property type="project" value="UniProtKB-UniRule"/>
</dbReference>
<dbReference type="GO" id="GO:0006207">
    <property type="term" value="P:'de novo' pyrimidine nucleobase biosynthetic process"/>
    <property type="evidence" value="ECO:0007669"/>
    <property type="project" value="InterPro"/>
</dbReference>
<dbReference type="GO" id="GO:0044205">
    <property type="term" value="P:'de novo' UMP biosynthetic process"/>
    <property type="evidence" value="ECO:0007669"/>
    <property type="project" value="UniProtKB-UniRule"/>
</dbReference>
<dbReference type="GO" id="GO:0006520">
    <property type="term" value="P:amino acid metabolic process"/>
    <property type="evidence" value="ECO:0007669"/>
    <property type="project" value="InterPro"/>
</dbReference>
<dbReference type="FunFam" id="3.40.50.1370:FF:000011">
    <property type="entry name" value="Aspartate carbamoyltransferase"/>
    <property type="match status" value="1"/>
</dbReference>
<dbReference type="Gene3D" id="3.40.50.1370">
    <property type="entry name" value="Aspartate/ornithine carbamoyltransferase"/>
    <property type="match status" value="2"/>
</dbReference>
<dbReference type="HAMAP" id="MF_00001">
    <property type="entry name" value="Asp_carb_tr"/>
    <property type="match status" value="1"/>
</dbReference>
<dbReference type="InterPro" id="IPR006132">
    <property type="entry name" value="Asp/Orn_carbamoyltranf_P-bd"/>
</dbReference>
<dbReference type="InterPro" id="IPR006130">
    <property type="entry name" value="Asp/Orn_carbamoylTrfase"/>
</dbReference>
<dbReference type="InterPro" id="IPR036901">
    <property type="entry name" value="Asp/Orn_carbamoylTrfase_sf"/>
</dbReference>
<dbReference type="InterPro" id="IPR002082">
    <property type="entry name" value="Asp_carbamoyltransf"/>
</dbReference>
<dbReference type="InterPro" id="IPR006131">
    <property type="entry name" value="Asp_carbamoyltransf_Asp/Orn-bd"/>
</dbReference>
<dbReference type="NCBIfam" id="TIGR00670">
    <property type="entry name" value="asp_carb_tr"/>
    <property type="match status" value="1"/>
</dbReference>
<dbReference type="NCBIfam" id="NF002032">
    <property type="entry name" value="PRK00856.1"/>
    <property type="match status" value="1"/>
</dbReference>
<dbReference type="PANTHER" id="PTHR45753:SF6">
    <property type="entry name" value="ASPARTATE CARBAMOYLTRANSFERASE"/>
    <property type="match status" value="1"/>
</dbReference>
<dbReference type="PANTHER" id="PTHR45753">
    <property type="entry name" value="ORNITHINE CARBAMOYLTRANSFERASE, MITOCHONDRIAL"/>
    <property type="match status" value="1"/>
</dbReference>
<dbReference type="Pfam" id="PF00185">
    <property type="entry name" value="OTCace"/>
    <property type="match status" value="1"/>
</dbReference>
<dbReference type="Pfam" id="PF02729">
    <property type="entry name" value="OTCace_N"/>
    <property type="match status" value="1"/>
</dbReference>
<dbReference type="PRINTS" id="PR00100">
    <property type="entry name" value="AOTCASE"/>
</dbReference>
<dbReference type="PRINTS" id="PR00101">
    <property type="entry name" value="ATCASE"/>
</dbReference>
<dbReference type="SUPFAM" id="SSF53671">
    <property type="entry name" value="Aspartate/ornithine carbamoyltransferase"/>
    <property type="match status" value="1"/>
</dbReference>
<dbReference type="PROSITE" id="PS00097">
    <property type="entry name" value="CARBAMOYLTRANSFERASE"/>
    <property type="match status" value="1"/>
</dbReference>
<gene>
    <name evidence="1" type="primary">pyrB</name>
    <name type="ordered locus">NWMN_1111</name>
</gene>
<accession>A6QGA1</accession>
<feature type="chain" id="PRO_1000070901" description="Aspartate carbamoyltransferase catalytic subunit">
    <location>
        <begin position="1"/>
        <end position="293"/>
    </location>
</feature>
<feature type="binding site" evidence="1">
    <location>
        <position position="50"/>
    </location>
    <ligand>
        <name>carbamoyl phosphate</name>
        <dbReference type="ChEBI" id="CHEBI:58228"/>
    </ligand>
</feature>
<feature type="binding site" evidence="1">
    <location>
        <position position="51"/>
    </location>
    <ligand>
        <name>carbamoyl phosphate</name>
        <dbReference type="ChEBI" id="CHEBI:58228"/>
    </ligand>
</feature>
<feature type="binding site" evidence="1">
    <location>
        <position position="78"/>
    </location>
    <ligand>
        <name>L-aspartate</name>
        <dbReference type="ChEBI" id="CHEBI:29991"/>
    </ligand>
</feature>
<feature type="binding site" evidence="1">
    <location>
        <position position="100"/>
    </location>
    <ligand>
        <name>carbamoyl phosphate</name>
        <dbReference type="ChEBI" id="CHEBI:58228"/>
    </ligand>
</feature>
<feature type="binding site" evidence="1">
    <location>
        <position position="127"/>
    </location>
    <ligand>
        <name>carbamoyl phosphate</name>
        <dbReference type="ChEBI" id="CHEBI:58228"/>
    </ligand>
</feature>
<feature type="binding site" evidence="1">
    <location>
        <position position="130"/>
    </location>
    <ligand>
        <name>carbamoyl phosphate</name>
        <dbReference type="ChEBI" id="CHEBI:58228"/>
    </ligand>
</feature>
<feature type="binding site" evidence="1">
    <location>
        <position position="160"/>
    </location>
    <ligand>
        <name>L-aspartate</name>
        <dbReference type="ChEBI" id="CHEBI:29991"/>
    </ligand>
</feature>
<feature type="binding site" evidence="1">
    <location>
        <position position="210"/>
    </location>
    <ligand>
        <name>L-aspartate</name>
        <dbReference type="ChEBI" id="CHEBI:29991"/>
    </ligand>
</feature>
<feature type="binding site" evidence="1">
    <location>
        <position position="253"/>
    </location>
    <ligand>
        <name>carbamoyl phosphate</name>
        <dbReference type="ChEBI" id="CHEBI:58228"/>
    </ligand>
</feature>
<feature type="binding site" evidence="1">
    <location>
        <position position="254"/>
    </location>
    <ligand>
        <name>carbamoyl phosphate</name>
        <dbReference type="ChEBI" id="CHEBI:58228"/>
    </ligand>
</feature>
<organism>
    <name type="scientific">Staphylococcus aureus (strain Newman)</name>
    <dbReference type="NCBI Taxonomy" id="426430"/>
    <lineage>
        <taxon>Bacteria</taxon>
        <taxon>Bacillati</taxon>
        <taxon>Bacillota</taxon>
        <taxon>Bacilli</taxon>
        <taxon>Bacillales</taxon>
        <taxon>Staphylococcaceae</taxon>
        <taxon>Staphylococcus</taxon>
    </lineage>
</organism>
<evidence type="ECO:0000255" key="1">
    <source>
        <dbReference type="HAMAP-Rule" id="MF_00001"/>
    </source>
</evidence>